<sequence>MKFVGAHVSAAGGVDQAVIRAHELEATAFALFTKNQRQWRAAPLAEDVIEKFKLACEKYGYTSAQILPHDSYLINLGHPVTEALEKSREAFIDELVRCQQLGLSLLNFHPGSHLLQIDEDQCLARIAESINIALDATEGVTAVIENTAGQGSNLGFKFEHLAAIIERVEDKSRVGVCIDTCHAFAAGYDLRTEEDCEHTFAALGKIVGFQYLRGMHLNDAKSEFNSRVDRHHSLGEGNIGKTVFSYIMRDSRFDNIPLILETVNMDIWAEEIAWLKSQAEIEPSL</sequence>
<accession>B1JRM5</accession>
<protein>
    <recommendedName>
        <fullName evidence="1">Probable endonuclease 4</fullName>
        <ecNumber evidence="1">3.1.21.2</ecNumber>
    </recommendedName>
    <alternativeName>
        <fullName evidence="1">Endodeoxyribonuclease IV</fullName>
    </alternativeName>
    <alternativeName>
        <fullName evidence="1">Endonuclease IV</fullName>
    </alternativeName>
</protein>
<proteinExistence type="inferred from homology"/>
<name>END4_YERPY</name>
<gene>
    <name evidence="1" type="primary">nfo</name>
    <name type="ordered locus">YPK_2756</name>
</gene>
<organism>
    <name type="scientific">Yersinia pseudotuberculosis serotype O:3 (strain YPIII)</name>
    <dbReference type="NCBI Taxonomy" id="502800"/>
    <lineage>
        <taxon>Bacteria</taxon>
        <taxon>Pseudomonadati</taxon>
        <taxon>Pseudomonadota</taxon>
        <taxon>Gammaproteobacteria</taxon>
        <taxon>Enterobacterales</taxon>
        <taxon>Yersiniaceae</taxon>
        <taxon>Yersinia</taxon>
    </lineage>
</organism>
<dbReference type="EC" id="3.1.21.2" evidence="1"/>
<dbReference type="EMBL" id="CP000950">
    <property type="protein sequence ID" value="ACA69033.1"/>
    <property type="molecule type" value="Genomic_DNA"/>
</dbReference>
<dbReference type="RefSeq" id="WP_002208791.1">
    <property type="nucleotide sequence ID" value="NZ_CP009792.1"/>
</dbReference>
<dbReference type="SMR" id="B1JRM5"/>
<dbReference type="GeneID" id="57977438"/>
<dbReference type="KEGG" id="ypy:YPK_2756"/>
<dbReference type="PATRIC" id="fig|502800.11.peg.3463"/>
<dbReference type="GO" id="GO:0008833">
    <property type="term" value="F:deoxyribonuclease IV (phage-T4-induced) activity"/>
    <property type="evidence" value="ECO:0007669"/>
    <property type="project" value="UniProtKB-UniRule"/>
</dbReference>
<dbReference type="GO" id="GO:0003677">
    <property type="term" value="F:DNA binding"/>
    <property type="evidence" value="ECO:0007669"/>
    <property type="project" value="InterPro"/>
</dbReference>
<dbReference type="GO" id="GO:0003906">
    <property type="term" value="F:DNA-(apurinic or apyrimidinic site) endonuclease activity"/>
    <property type="evidence" value="ECO:0007669"/>
    <property type="project" value="TreeGrafter"/>
</dbReference>
<dbReference type="GO" id="GO:0008081">
    <property type="term" value="F:phosphoric diester hydrolase activity"/>
    <property type="evidence" value="ECO:0007669"/>
    <property type="project" value="TreeGrafter"/>
</dbReference>
<dbReference type="GO" id="GO:0008270">
    <property type="term" value="F:zinc ion binding"/>
    <property type="evidence" value="ECO:0007669"/>
    <property type="project" value="UniProtKB-UniRule"/>
</dbReference>
<dbReference type="GO" id="GO:0006284">
    <property type="term" value="P:base-excision repair"/>
    <property type="evidence" value="ECO:0007669"/>
    <property type="project" value="TreeGrafter"/>
</dbReference>
<dbReference type="CDD" id="cd00019">
    <property type="entry name" value="AP2Ec"/>
    <property type="match status" value="1"/>
</dbReference>
<dbReference type="FunFam" id="3.20.20.150:FF:000001">
    <property type="entry name" value="Probable endonuclease 4"/>
    <property type="match status" value="1"/>
</dbReference>
<dbReference type="Gene3D" id="3.20.20.150">
    <property type="entry name" value="Divalent-metal-dependent TIM barrel enzymes"/>
    <property type="match status" value="1"/>
</dbReference>
<dbReference type="HAMAP" id="MF_00152">
    <property type="entry name" value="Nfo"/>
    <property type="match status" value="1"/>
</dbReference>
<dbReference type="InterPro" id="IPR001719">
    <property type="entry name" value="AP_endonuc_2"/>
</dbReference>
<dbReference type="InterPro" id="IPR018246">
    <property type="entry name" value="AP_endonuc_F2_Zn_BS"/>
</dbReference>
<dbReference type="InterPro" id="IPR036237">
    <property type="entry name" value="Xyl_isomerase-like_sf"/>
</dbReference>
<dbReference type="InterPro" id="IPR013022">
    <property type="entry name" value="Xyl_isomerase-like_TIM-brl"/>
</dbReference>
<dbReference type="NCBIfam" id="TIGR00587">
    <property type="entry name" value="nfo"/>
    <property type="match status" value="1"/>
</dbReference>
<dbReference type="NCBIfam" id="NF002199">
    <property type="entry name" value="PRK01060.1-4"/>
    <property type="match status" value="1"/>
</dbReference>
<dbReference type="PANTHER" id="PTHR21445:SF0">
    <property type="entry name" value="APURINIC-APYRIMIDINIC ENDONUCLEASE"/>
    <property type="match status" value="1"/>
</dbReference>
<dbReference type="PANTHER" id="PTHR21445">
    <property type="entry name" value="ENDONUCLEASE IV ENDODEOXYRIBONUCLEASE IV"/>
    <property type="match status" value="1"/>
</dbReference>
<dbReference type="Pfam" id="PF01261">
    <property type="entry name" value="AP_endonuc_2"/>
    <property type="match status" value="1"/>
</dbReference>
<dbReference type="SMART" id="SM00518">
    <property type="entry name" value="AP2Ec"/>
    <property type="match status" value="1"/>
</dbReference>
<dbReference type="SUPFAM" id="SSF51658">
    <property type="entry name" value="Xylose isomerase-like"/>
    <property type="match status" value="1"/>
</dbReference>
<dbReference type="PROSITE" id="PS00729">
    <property type="entry name" value="AP_NUCLEASE_F2_1"/>
    <property type="match status" value="1"/>
</dbReference>
<dbReference type="PROSITE" id="PS00730">
    <property type="entry name" value="AP_NUCLEASE_F2_2"/>
    <property type="match status" value="1"/>
</dbReference>
<dbReference type="PROSITE" id="PS00731">
    <property type="entry name" value="AP_NUCLEASE_F2_3"/>
    <property type="match status" value="1"/>
</dbReference>
<dbReference type="PROSITE" id="PS51432">
    <property type="entry name" value="AP_NUCLEASE_F2_4"/>
    <property type="match status" value="1"/>
</dbReference>
<comment type="function">
    <text evidence="1">Endonuclease IV plays a role in DNA repair. It cleaves phosphodiester bonds at apurinic or apyrimidinic (AP) sites, generating a 3'-hydroxyl group and a 5'-terminal sugar phosphate.</text>
</comment>
<comment type="catalytic activity">
    <reaction evidence="1">
        <text>Endonucleolytic cleavage to 5'-phosphooligonucleotide end-products.</text>
        <dbReference type="EC" id="3.1.21.2"/>
    </reaction>
</comment>
<comment type="cofactor">
    <cofactor evidence="1">
        <name>Zn(2+)</name>
        <dbReference type="ChEBI" id="CHEBI:29105"/>
    </cofactor>
    <text evidence="1">Binds 3 Zn(2+) ions.</text>
</comment>
<comment type="similarity">
    <text evidence="1">Belongs to the AP endonuclease 2 family.</text>
</comment>
<reference key="1">
    <citation type="submission" date="2008-02" db="EMBL/GenBank/DDBJ databases">
        <title>Complete sequence of Yersinia pseudotuberculosis YPIII.</title>
        <authorList>
            <consortium name="US DOE Joint Genome Institute"/>
            <person name="Copeland A."/>
            <person name="Lucas S."/>
            <person name="Lapidus A."/>
            <person name="Glavina del Rio T."/>
            <person name="Dalin E."/>
            <person name="Tice H."/>
            <person name="Bruce D."/>
            <person name="Goodwin L."/>
            <person name="Pitluck S."/>
            <person name="Munk A.C."/>
            <person name="Brettin T."/>
            <person name="Detter J.C."/>
            <person name="Han C."/>
            <person name="Tapia R."/>
            <person name="Schmutz J."/>
            <person name="Larimer F."/>
            <person name="Land M."/>
            <person name="Hauser L."/>
            <person name="Challacombe J.F."/>
            <person name="Green L."/>
            <person name="Lindler L.E."/>
            <person name="Nikolich M.P."/>
            <person name="Richardson P."/>
        </authorList>
    </citation>
    <scope>NUCLEOTIDE SEQUENCE [LARGE SCALE GENOMIC DNA]</scope>
    <source>
        <strain>YPIII</strain>
    </source>
</reference>
<evidence type="ECO:0000255" key="1">
    <source>
        <dbReference type="HAMAP-Rule" id="MF_00152"/>
    </source>
</evidence>
<feature type="chain" id="PRO_1000096913" description="Probable endonuclease 4">
    <location>
        <begin position="1"/>
        <end position="285"/>
    </location>
</feature>
<feature type="binding site" evidence="1">
    <location>
        <position position="69"/>
    </location>
    <ligand>
        <name>Zn(2+)</name>
        <dbReference type="ChEBI" id="CHEBI:29105"/>
        <label>1</label>
    </ligand>
</feature>
<feature type="binding site" evidence="1">
    <location>
        <position position="109"/>
    </location>
    <ligand>
        <name>Zn(2+)</name>
        <dbReference type="ChEBI" id="CHEBI:29105"/>
        <label>1</label>
    </ligand>
</feature>
<feature type="binding site" evidence="1">
    <location>
        <position position="145"/>
    </location>
    <ligand>
        <name>Zn(2+)</name>
        <dbReference type="ChEBI" id="CHEBI:29105"/>
        <label>1</label>
    </ligand>
</feature>
<feature type="binding site" evidence="1">
    <location>
        <position position="145"/>
    </location>
    <ligand>
        <name>Zn(2+)</name>
        <dbReference type="ChEBI" id="CHEBI:29105"/>
        <label>2</label>
    </ligand>
</feature>
<feature type="binding site" evidence="1">
    <location>
        <position position="179"/>
    </location>
    <ligand>
        <name>Zn(2+)</name>
        <dbReference type="ChEBI" id="CHEBI:29105"/>
        <label>2</label>
    </ligand>
</feature>
<feature type="binding site" evidence="1">
    <location>
        <position position="182"/>
    </location>
    <ligand>
        <name>Zn(2+)</name>
        <dbReference type="ChEBI" id="CHEBI:29105"/>
        <label>3</label>
    </ligand>
</feature>
<feature type="binding site" evidence="1">
    <location>
        <position position="216"/>
    </location>
    <ligand>
        <name>Zn(2+)</name>
        <dbReference type="ChEBI" id="CHEBI:29105"/>
        <label>2</label>
    </ligand>
</feature>
<feature type="binding site" evidence="1">
    <location>
        <position position="229"/>
    </location>
    <ligand>
        <name>Zn(2+)</name>
        <dbReference type="ChEBI" id="CHEBI:29105"/>
        <label>3</label>
    </ligand>
</feature>
<feature type="binding site" evidence="1">
    <location>
        <position position="231"/>
    </location>
    <ligand>
        <name>Zn(2+)</name>
        <dbReference type="ChEBI" id="CHEBI:29105"/>
        <label>3</label>
    </ligand>
</feature>
<feature type="binding site" evidence="1">
    <location>
        <position position="261"/>
    </location>
    <ligand>
        <name>Zn(2+)</name>
        <dbReference type="ChEBI" id="CHEBI:29105"/>
        <label>2</label>
    </ligand>
</feature>
<keyword id="KW-0227">DNA damage</keyword>
<keyword id="KW-0234">DNA repair</keyword>
<keyword id="KW-0255">Endonuclease</keyword>
<keyword id="KW-0378">Hydrolase</keyword>
<keyword id="KW-0479">Metal-binding</keyword>
<keyword id="KW-0540">Nuclease</keyword>
<keyword id="KW-0862">Zinc</keyword>